<comment type="function">
    <text evidence="1">Probably involved in the diffusion of protonated ethanolamine (EA) into the cell at low pH. At low pH most EA is protonated, and this permease becomes necessary.</text>
</comment>
<comment type="catalytic activity">
    <reaction evidence="1">
        <text>ethanolamine(in) = ethanolamine(out)</text>
        <dbReference type="Rhea" id="RHEA:32747"/>
        <dbReference type="ChEBI" id="CHEBI:57603"/>
    </reaction>
</comment>
<comment type="pathway">
    <text>Amine and polyamine degradation; ethanolamine degradation.</text>
</comment>
<comment type="subcellular location">
    <subcellularLocation>
        <location evidence="3">Cell inner membrane</location>
        <topology evidence="2">Multi-pass membrane protein</topology>
    </subcellularLocation>
</comment>
<comment type="similarity">
    <text evidence="4">Belongs to the EutH family.</text>
</comment>
<comment type="caution">
    <text evidence="5">In strain MG1655 the eut operon is interrupted by the CPZ-55 prophage, encoding 9 genes situated between eutA and eutB, which are translated in the other direction. CPZ-55 may prevent expression of the eut operon in strain MG1655. Strain W3110 does not have this prophage element and should be able to express the operon.</text>
</comment>
<name>EUTH_ECOLI</name>
<keyword id="KW-0997">Cell inner membrane</keyword>
<keyword id="KW-1003">Cell membrane</keyword>
<keyword id="KW-0472">Membrane</keyword>
<keyword id="KW-1185">Reference proteome</keyword>
<keyword id="KW-0812">Transmembrane</keyword>
<keyword id="KW-1133">Transmembrane helix</keyword>
<keyword id="KW-0813">Transport</keyword>
<protein>
    <recommendedName>
        <fullName evidence="4">Probable ethanolamine permease EutH</fullName>
    </recommendedName>
    <alternativeName>
        <fullName>Ethanolamine utilization protein EutH</fullName>
    </alternativeName>
</protein>
<sequence>MGINEIIMYIMMFFMLIAAVDRILSQFGGSARFLGKFGKSIEGSGGQFEEGFMAMGALGLAMVGMTALAPVLAHVLGPVIIPVYEMLGANPSMFAGTLLACDMGGFFLAKELAGGDVAAWLYSGLILGSMMGPTIVFSIPVALGIIEPSDRRYLALGVLAGIVTIPIGCIAGGLVAMYSGVQINGQPVEFTFALILMNMIPVIIVAILVALGLKFIPEKMINGFQIFAKFLVALITLGLAAAVVKFLLGWELIPGLDPIFMAPGDKPGEVMRAIEVIGSISCVLLGAYPMVLLLTRWFEKPLMSVGKVLNMNNIAAAGMVATLANNIPMFGMMKQMDTRGKVINCAFAVSAAFALGDHLGFAAANMNAMIFPMIVGKLIGGVTAIGVAMMLVPKEDATATKTEAEAQS</sequence>
<dbReference type="EMBL" id="U00096">
    <property type="protein sequence ID" value="AAC75505.1"/>
    <property type="molecule type" value="Genomic_DNA"/>
</dbReference>
<dbReference type="EMBL" id="AP009048">
    <property type="protein sequence ID" value="BAA16330.2"/>
    <property type="molecule type" value="Genomic_DNA"/>
</dbReference>
<dbReference type="PIR" id="C65020">
    <property type="entry name" value="C65020"/>
</dbReference>
<dbReference type="RefSeq" id="NP_416947.1">
    <property type="nucleotide sequence ID" value="NC_000913.3"/>
</dbReference>
<dbReference type="RefSeq" id="WP_000512372.1">
    <property type="nucleotide sequence ID" value="NZ_STEB01000039.1"/>
</dbReference>
<dbReference type="BioGRID" id="4259191">
    <property type="interactions" value="11"/>
</dbReference>
<dbReference type="DIP" id="DIP-9533N"/>
<dbReference type="FunCoup" id="P76552">
    <property type="interactions" value="147"/>
</dbReference>
<dbReference type="IntAct" id="P76552">
    <property type="interactions" value="1"/>
</dbReference>
<dbReference type="STRING" id="511145.b2452"/>
<dbReference type="PaxDb" id="511145-b2452"/>
<dbReference type="EnsemblBacteria" id="AAC75505">
    <property type="protein sequence ID" value="AAC75505"/>
    <property type="gene ID" value="b2452"/>
</dbReference>
<dbReference type="GeneID" id="944979"/>
<dbReference type="KEGG" id="ecj:JW2436"/>
<dbReference type="KEGG" id="eco:b2452"/>
<dbReference type="KEGG" id="ecoc:C3026_13610"/>
<dbReference type="PATRIC" id="fig|1411691.4.peg.4288"/>
<dbReference type="EchoBASE" id="EB3934"/>
<dbReference type="eggNOG" id="COG3192">
    <property type="taxonomic scope" value="Bacteria"/>
</dbReference>
<dbReference type="HOGENOM" id="CLU_061142_0_0_6"/>
<dbReference type="InParanoid" id="P76552"/>
<dbReference type="OMA" id="AFVFGDH"/>
<dbReference type="OrthoDB" id="9778282at2"/>
<dbReference type="PhylomeDB" id="P76552"/>
<dbReference type="BioCyc" id="EcoCyc:G7282-MONOMER"/>
<dbReference type="UniPathway" id="UPA00560"/>
<dbReference type="PRO" id="PR:P76552"/>
<dbReference type="Proteomes" id="UP000000625">
    <property type="component" value="Chromosome"/>
</dbReference>
<dbReference type="GO" id="GO:0005886">
    <property type="term" value="C:plasma membrane"/>
    <property type="evidence" value="ECO:0000314"/>
    <property type="project" value="EcoCyc"/>
</dbReference>
<dbReference type="GO" id="GO:0034228">
    <property type="term" value="F:ethanolamine transmembrane transporter activity"/>
    <property type="evidence" value="ECO:0007669"/>
    <property type="project" value="InterPro"/>
</dbReference>
<dbReference type="GO" id="GO:0046336">
    <property type="term" value="P:ethanolamine catabolic process"/>
    <property type="evidence" value="ECO:0007669"/>
    <property type="project" value="UniProtKB-UniPathway"/>
</dbReference>
<dbReference type="InterPro" id="IPR007441">
    <property type="entry name" value="EutH"/>
</dbReference>
<dbReference type="NCBIfam" id="NF011665">
    <property type="entry name" value="PRK15086.1-1"/>
    <property type="match status" value="1"/>
</dbReference>
<dbReference type="PANTHER" id="PTHR40089:SF1">
    <property type="entry name" value="ETHANOLAMINE PERMEASE EUTH-RELATED"/>
    <property type="match status" value="1"/>
</dbReference>
<dbReference type="PANTHER" id="PTHR40089">
    <property type="entry name" value="ETHANOLAMINE UTILIZATION PROTEIN EUTH"/>
    <property type="match status" value="1"/>
</dbReference>
<dbReference type="Pfam" id="PF04346">
    <property type="entry name" value="EutH"/>
    <property type="match status" value="1"/>
</dbReference>
<dbReference type="PIRSF" id="PIRSF019466">
    <property type="entry name" value="EutH"/>
    <property type="match status" value="1"/>
</dbReference>
<accession>P76552</accession>
<accession>P76968</accession>
<evidence type="ECO:0000250" key="1">
    <source>
        <dbReference type="UniProtKB" id="P41796"/>
    </source>
</evidence>
<evidence type="ECO:0000255" key="2"/>
<evidence type="ECO:0000269" key="3">
    <source>
    </source>
</evidence>
<evidence type="ECO:0000305" key="4"/>
<evidence type="ECO:0000305" key="5">
    <source>
    </source>
</evidence>
<organism>
    <name type="scientific">Escherichia coli (strain K12)</name>
    <dbReference type="NCBI Taxonomy" id="83333"/>
    <lineage>
        <taxon>Bacteria</taxon>
        <taxon>Pseudomonadati</taxon>
        <taxon>Pseudomonadota</taxon>
        <taxon>Gammaproteobacteria</taxon>
        <taxon>Enterobacterales</taxon>
        <taxon>Enterobacteriaceae</taxon>
        <taxon>Escherichia</taxon>
    </lineage>
</organism>
<feature type="chain" id="PRO_0000087086" description="Probable ethanolamine permease EutH">
    <location>
        <begin position="1"/>
        <end position="408"/>
    </location>
</feature>
<feature type="transmembrane region" description="Helical" evidence="2">
    <location>
        <begin position="1"/>
        <end position="21"/>
    </location>
</feature>
<feature type="transmembrane region" description="Helical" evidence="2">
    <location>
        <begin position="61"/>
        <end position="81"/>
    </location>
</feature>
<feature type="transmembrane region" description="Helical" evidence="2">
    <location>
        <begin position="89"/>
        <end position="109"/>
    </location>
</feature>
<feature type="transmembrane region" description="Helical" evidence="2">
    <location>
        <begin position="126"/>
        <end position="146"/>
    </location>
</feature>
<feature type="transmembrane region" description="Helical" evidence="2">
    <location>
        <begin position="155"/>
        <end position="175"/>
    </location>
</feature>
<feature type="transmembrane region" description="Helical" evidence="2">
    <location>
        <begin position="192"/>
        <end position="212"/>
    </location>
</feature>
<feature type="transmembrane region" description="Helical" evidence="2">
    <location>
        <begin position="230"/>
        <end position="250"/>
    </location>
</feature>
<feature type="transmembrane region" description="Helical" evidence="2">
    <location>
        <begin position="274"/>
        <end position="294"/>
    </location>
</feature>
<feature type="transmembrane region" description="Helical" evidence="2">
    <location>
        <begin position="313"/>
        <end position="333"/>
    </location>
</feature>
<feature type="transmembrane region" description="Helical" evidence="2">
    <location>
        <begin position="342"/>
        <end position="362"/>
    </location>
</feature>
<feature type="transmembrane region" description="Helical" evidence="2">
    <location>
        <begin position="369"/>
        <end position="389"/>
    </location>
</feature>
<gene>
    <name type="primary">eutH</name>
    <name type="synonym">yffU</name>
    <name type="ordered locus">b2452</name>
    <name type="ordered locus">JW2436</name>
</gene>
<reference key="1">
    <citation type="journal article" date="1997" name="DNA Res.">
        <title>Construction of a contiguous 874-kb sequence of the Escherichia coli-K12 genome corresponding to 50.0-68.8 min on the linkage map and analysis of its sequence features.</title>
        <authorList>
            <person name="Yamamoto Y."/>
            <person name="Aiba H."/>
            <person name="Baba T."/>
            <person name="Hayashi K."/>
            <person name="Inada T."/>
            <person name="Isono K."/>
            <person name="Itoh T."/>
            <person name="Kimura S."/>
            <person name="Kitagawa M."/>
            <person name="Makino K."/>
            <person name="Miki T."/>
            <person name="Mitsuhashi N."/>
            <person name="Mizobuchi K."/>
            <person name="Mori H."/>
            <person name="Nakade S."/>
            <person name="Nakamura Y."/>
            <person name="Nashimoto H."/>
            <person name="Oshima T."/>
            <person name="Oyama S."/>
            <person name="Saito N."/>
            <person name="Sampei G."/>
            <person name="Satoh Y."/>
            <person name="Sivasundaram S."/>
            <person name="Tagami H."/>
            <person name="Takahashi H."/>
            <person name="Takeda J."/>
            <person name="Takemoto K."/>
            <person name="Uehara K."/>
            <person name="Wada C."/>
            <person name="Yamagata S."/>
            <person name="Horiuchi T."/>
        </authorList>
    </citation>
    <scope>NUCLEOTIDE SEQUENCE [LARGE SCALE GENOMIC DNA]</scope>
    <source>
        <strain>K12 / W3110 / ATCC 27325 / DSM 5911</strain>
    </source>
</reference>
<reference key="2">
    <citation type="journal article" date="1997" name="Science">
        <title>The complete genome sequence of Escherichia coli K-12.</title>
        <authorList>
            <person name="Blattner F.R."/>
            <person name="Plunkett G. III"/>
            <person name="Bloch C.A."/>
            <person name="Perna N.T."/>
            <person name="Burland V."/>
            <person name="Riley M."/>
            <person name="Collado-Vides J."/>
            <person name="Glasner J.D."/>
            <person name="Rode C.K."/>
            <person name="Mayhew G.F."/>
            <person name="Gregor J."/>
            <person name="Davis N.W."/>
            <person name="Kirkpatrick H.A."/>
            <person name="Goeden M.A."/>
            <person name="Rose D.J."/>
            <person name="Mau B."/>
            <person name="Shao Y."/>
        </authorList>
    </citation>
    <scope>NUCLEOTIDE SEQUENCE [LARGE SCALE GENOMIC DNA]</scope>
    <source>
        <strain>K12 / MG1655 / ATCC 47076</strain>
    </source>
</reference>
<reference key="3">
    <citation type="journal article" date="2006" name="Mol. Syst. Biol.">
        <title>Highly accurate genome sequences of Escherichia coli K-12 strains MG1655 and W3110.</title>
        <authorList>
            <person name="Hayashi K."/>
            <person name="Morooka N."/>
            <person name="Yamamoto Y."/>
            <person name="Fujita K."/>
            <person name="Isono K."/>
            <person name="Choi S."/>
            <person name="Ohtsubo E."/>
            <person name="Baba T."/>
            <person name="Wanner B.L."/>
            <person name="Mori H."/>
            <person name="Horiuchi T."/>
        </authorList>
    </citation>
    <scope>NUCLEOTIDE SEQUENCE [LARGE SCALE GENOMIC DNA]</scope>
    <source>
        <strain>K12 / W3110 / ATCC 27325 / DSM 5911</strain>
    </source>
</reference>
<reference key="4">
    <citation type="journal article" date="2005" name="Science">
        <title>Global topology analysis of the Escherichia coli inner membrane proteome.</title>
        <authorList>
            <person name="Daley D.O."/>
            <person name="Rapp M."/>
            <person name="Granseth E."/>
            <person name="Melen K."/>
            <person name="Drew D."/>
            <person name="von Heijne G."/>
        </authorList>
    </citation>
    <scope>SUBCELLULAR LOCATION</scope>
    <source>
        <strain>K12 / MG1655 / ATCC 47076</strain>
    </source>
</reference>
<proteinExistence type="inferred from homology"/>